<dbReference type="EC" id="1.4.4.2" evidence="1"/>
<dbReference type="EMBL" id="CP000781">
    <property type="protein sequence ID" value="ABS67442.1"/>
    <property type="molecule type" value="Genomic_DNA"/>
</dbReference>
<dbReference type="SMR" id="A7IHE9"/>
<dbReference type="STRING" id="78245.Xaut_2198"/>
<dbReference type="KEGG" id="xau:Xaut_2198"/>
<dbReference type="eggNOG" id="COG0403">
    <property type="taxonomic scope" value="Bacteria"/>
</dbReference>
<dbReference type="HOGENOM" id="CLU_004620_0_2_5"/>
<dbReference type="OrthoDB" id="9801272at2"/>
<dbReference type="PhylomeDB" id="A7IHE9"/>
<dbReference type="Proteomes" id="UP000002417">
    <property type="component" value="Chromosome"/>
</dbReference>
<dbReference type="GO" id="GO:0004375">
    <property type="term" value="F:glycine dehydrogenase (decarboxylating) activity"/>
    <property type="evidence" value="ECO:0007669"/>
    <property type="project" value="UniProtKB-EC"/>
</dbReference>
<dbReference type="GO" id="GO:0019464">
    <property type="term" value="P:glycine decarboxylation via glycine cleavage system"/>
    <property type="evidence" value="ECO:0007669"/>
    <property type="project" value="UniProtKB-UniRule"/>
</dbReference>
<dbReference type="GO" id="GO:0009116">
    <property type="term" value="P:nucleoside metabolic process"/>
    <property type="evidence" value="ECO:0007669"/>
    <property type="project" value="InterPro"/>
</dbReference>
<dbReference type="CDD" id="cd00613">
    <property type="entry name" value="GDC-P"/>
    <property type="match status" value="1"/>
</dbReference>
<dbReference type="Gene3D" id="3.90.1150.10">
    <property type="entry name" value="Aspartate Aminotransferase, domain 1"/>
    <property type="match status" value="1"/>
</dbReference>
<dbReference type="Gene3D" id="3.40.640.10">
    <property type="entry name" value="Type I PLP-dependent aspartate aminotransferase-like (Major domain)"/>
    <property type="match status" value="1"/>
</dbReference>
<dbReference type="HAMAP" id="MF_00712">
    <property type="entry name" value="GcvPA"/>
    <property type="match status" value="1"/>
</dbReference>
<dbReference type="InterPro" id="IPR023010">
    <property type="entry name" value="GcvPA"/>
</dbReference>
<dbReference type="InterPro" id="IPR049315">
    <property type="entry name" value="GDC-P_N"/>
</dbReference>
<dbReference type="InterPro" id="IPR020581">
    <property type="entry name" value="GDC_P"/>
</dbReference>
<dbReference type="InterPro" id="IPR015424">
    <property type="entry name" value="PyrdxlP-dep_Trfase"/>
</dbReference>
<dbReference type="InterPro" id="IPR015421">
    <property type="entry name" value="PyrdxlP-dep_Trfase_major"/>
</dbReference>
<dbReference type="InterPro" id="IPR015422">
    <property type="entry name" value="PyrdxlP-dep_Trfase_small"/>
</dbReference>
<dbReference type="NCBIfam" id="NF001696">
    <property type="entry name" value="PRK00451.1"/>
    <property type="match status" value="1"/>
</dbReference>
<dbReference type="PANTHER" id="PTHR42806">
    <property type="entry name" value="GLYCINE CLEAVAGE SYSTEM P-PROTEIN"/>
    <property type="match status" value="1"/>
</dbReference>
<dbReference type="PANTHER" id="PTHR42806:SF1">
    <property type="entry name" value="GLYCINE DEHYDROGENASE (DECARBOXYLATING)"/>
    <property type="match status" value="1"/>
</dbReference>
<dbReference type="Pfam" id="PF02347">
    <property type="entry name" value="GDC-P"/>
    <property type="match status" value="1"/>
</dbReference>
<dbReference type="PIRSF" id="PIRSF006815">
    <property type="entry name" value="GcvPA"/>
    <property type="match status" value="1"/>
</dbReference>
<dbReference type="SUPFAM" id="SSF53383">
    <property type="entry name" value="PLP-dependent transferases"/>
    <property type="match status" value="1"/>
</dbReference>
<comment type="function">
    <text evidence="1">The glycine cleavage system catalyzes the degradation of glycine. The P protein binds the alpha-amino group of glycine through its pyridoxal phosphate cofactor; CO(2) is released and the remaining methylamine moiety is then transferred to the lipoamide cofactor of the H protein.</text>
</comment>
<comment type="catalytic activity">
    <reaction evidence="1">
        <text>N(6)-[(R)-lipoyl]-L-lysyl-[glycine-cleavage complex H protein] + glycine + H(+) = N(6)-[(R)-S(8)-aminomethyldihydrolipoyl]-L-lysyl-[glycine-cleavage complex H protein] + CO2</text>
        <dbReference type="Rhea" id="RHEA:24304"/>
        <dbReference type="Rhea" id="RHEA-COMP:10494"/>
        <dbReference type="Rhea" id="RHEA-COMP:10495"/>
        <dbReference type="ChEBI" id="CHEBI:15378"/>
        <dbReference type="ChEBI" id="CHEBI:16526"/>
        <dbReference type="ChEBI" id="CHEBI:57305"/>
        <dbReference type="ChEBI" id="CHEBI:83099"/>
        <dbReference type="ChEBI" id="CHEBI:83143"/>
        <dbReference type="EC" id="1.4.4.2"/>
    </reaction>
</comment>
<comment type="subunit">
    <text evidence="1">The glycine cleavage system is composed of four proteins: P, T, L and H. In this organism, the P 'protein' is a heterodimer of two subunits.</text>
</comment>
<comment type="similarity">
    <text evidence="1">Belongs to the GcvP family. N-terminal subunit subfamily.</text>
</comment>
<proteinExistence type="inferred from homology"/>
<reference key="1">
    <citation type="submission" date="2007-07" db="EMBL/GenBank/DDBJ databases">
        <title>Complete sequence of chromosome of Xanthobacter autotrophicus Py2.</title>
        <authorList>
            <consortium name="US DOE Joint Genome Institute"/>
            <person name="Copeland A."/>
            <person name="Lucas S."/>
            <person name="Lapidus A."/>
            <person name="Barry K."/>
            <person name="Glavina del Rio T."/>
            <person name="Hammon N."/>
            <person name="Israni S."/>
            <person name="Dalin E."/>
            <person name="Tice H."/>
            <person name="Pitluck S."/>
            <person name="Sims D."/>
            <person name="Brettin T."/>
            <person name="Bruce D."/>
            <person name="Detter J.C."/>
            <person name="Han C."/>
            <person name="Tapia R."/>
            <person name="Brainard J."/>
            <person name="Schmutz J."/>
            <person name="Larimer F."/>
            <person name="Land M."/>
            <person name="Hauser L."/>
            <person name="Kyrpides N."/>
            <person name="Kim E."/>
            <person name="Ensigns S.A."/>
            <person name="Richardson P."/>
        </authorList>
    </citation>
    <scope>NUCLEOTIDE SEQUENCE [LARGE SCALE GENOMIC DNA]</scope>
    <source>
        <strain>ATCC BAA-1158 / Py2</strain>
    </source>
</reference>
<accession>A7IHE9</accession>
<organism>
    <name type="scientific">Xanthobacter autotrophicus (strain ATCC BAA-1158 / Py2)</name>
    <dbReference type="NCBI Taxonomy" id="78245"/>
    <lineage>
        <taxon>Bacteria</taxon>
        <taxon>Pseudomonadati</taxon>
        <taxon>Pseudomonadota</taxon>
        <taxon>Alphaproteobacteria</taxon>
        <taxon>Hyphomicrobiales</taxon>
        <taxon>Xanthobacteraceae</taxon>
        <taxon>Xanthobacter</taxon>
    </lineage>
</organism>
<evidence type="ECO:0000255" key="1">
    <source>
        <dbReference type="HAMAP-Rule" id="MF_00712"/>
    </source>
</evidence>
<gene>
    <name evidence="1" type="primary">gcvPA</name>
    <name type="ordered locus">Xaut_2198</name>
</gene>
<name>GCSPA_XANP2</name>
<protein>
    <recommendedName>
        <fullName evidence="1">Probable glycine dehydrogenase (decarboxylating) subunit 1</fullName>
        <ecNumber evidence="1">1.4.4.2</ecNumber>
    </recommendedName>
    <alternativeName>
        <fullName evidence="1">Glycine cleavage system P-protein subunit 1</fullName>
    </alternativeName>
    <alternativeName>
        <fullName evidence="1">Glycine decarboxylase subunit 1</fullName>
    </alternativeName>
    <alternativeName>
        <fullName evidence="1">Glycine dehydrogenase (aminomethyl-transferring) subunit 1</fullName>
    </alternativeName>
</protein>
<feature type="chain" id="PRO_1000132490" description="Probable glycine dehydrogenase (decarboxylating) subunit 1">
    <location>
        <begin position="1"/>
        <end position="446"/>
    </location>
</feature>
<keyword id="KW-0560">Oxidoreductase</keyword>
<keyword id="KW-1185">Reference proteome</keyword>
<sequence>MRYLPLTPEDRAEMLARIGVASVDELFVDIPADKRETALPRLALHKSELEVERTLARLAGQNVPAGSVPFFVGAGAYRHHVPATVDHLIQRSEFLTSYTPYQPEIAQGTLQYLFEFQTQVAELTAMEVANASMYDGSTAAAEAVLMAHRVTRRRKAVLAGNLHPHYRSTIETVSRYAADEVVALPPAPFGEEDLITPIDDTVSCVVVQSPDVFGNLVDLKPIAEAAHKAGALLVAVFTEAVALGLIEPPGAQGADIVVGEGQSIGNALNFGGPYVGLFATRQKFVRQMPGRLAGETVDAEGRRGFVLTLSTREQHIRREKATSNICTNSGLCALAFTIHMSLLGKTGLTRLARANHAAACDLADRLAAVKGASVVNDTFFNEFTLRVPGPAADVVEKLAAKGILAGVPYSRLAPKSGLDDLILVAATETTTEDDRAAYAAALKEVL</sequence>